<organism>
    <name type="scientific">Xylella fastidiosa (strain M23)</name>
    <dbReference type="NCBI Taxonomy" id="405441"/>
    <lineage>
        <taxon>Bacteria</taxon>
        <taxon>Pseudomonadati</taxon>
        <taxon>Pseudomonadota</taxon>
        <taxon>Gammaproteobacteria</taxon>
        <taxon>Lysobacterales</taxon>
        <taxon>Lysobacteraceae</taxon>
        <taxon>Xylella</taxon>
    </lineage>
</organism>
<name>Y847_XYLF2</name>
<comment type="similarity">
    <text evidence="1">Belongs to the UPF0149 family.</text>
</comment>
<feature type="chain" id="PRO_1000120487" description="UPF0149 protein XfasM23_0847">
    <location>
        <begin position="1"/>
        <end position="185"/>
    </location>
</feature>
<evidence type="ECO:0000255" key="1">
    <source>
        <dbReference type="HAMAP-Rule" id="MF_00346"/>
    </source>
</evidence>
<reference key="1">
    <citation type="journal article" date="2010" name="J. Bacteriol.">
        <title>Whole genome sequences of two Xylella fastidiosa strains (M12 and M23) causing almond leaf scorch disease in California.</title>
        <authorList>
            <person name="Chen J."/>
            <person name="Xie G."/>
            <person name="Han S."/>
            <person name="Chertkov O."/>
            <person name="Sims D."/>
            <person name="Civerolo E.L."/>
        </authorList>
    </citation>
    <scope>NUCLEOTIDE SEQUENCE [LARGE SCALE GENOMIC DNA]</scope>
    <source>
        <strain>M23</strain>
    </source>
</reference>
<proteinExistence type="inferred from homology"/>
<sequence length="185" mass="19656">MESPMHLPEVIAVEQESQQMGLSVTAPELHGSLSGLLAGGGCNGPDWLAMILADAGVAAPPKGSVLERLYQATASQLEDPDFAFQLLLADDGATLAARAHALFEWCRAFLGGFGLAAHCRSVLSAEGDEILRDLAKLAQASVDDFDMNEEKEDGSLEEIEEFVRVAVLLLHGDCLIGPCAPQRLN</sequence>
<accession>B2IAK4</accession>
<protein>
    <recommendedName>
        <fullName evidence="1">UPF0149 protein XfasM23_0847</fullName>
    </recommendedName>
</protein>
<dbReference type="EMBL" id="CP001011">
    <property type="protein sequence ID" value="ACB92284.1"/>
    <property type="molecule type" value="Genomic_DNA"/>
</dbReference>
<dbReference type="SMR" id="B2IAK4"/>
<dbReference type="KEGG" id="xfn:XfasM23_0847"/>
<dbReference type="HOGENOM" id="CLU_085336_0_0_6"/>
<dbReference type="Proteomes" id="UP000001698">
    <property type="component" value="Chromosome"/>
</dbReference>
<dbReference type="GO" id="GO:0005829">
    <property type="term" value="C:cytosol"/>
    <property type="evidence" value="ECO:0007669"/>
    <property type="project" value="TreeGrafter"/>
</dbReference>
<dbReference type="Gene3D" id="1.20.120.740">
    <property type="entry name" value="YgfB uncharacterised protein family UPF0149, PF03695"/>
    <property type="match status" value="1"/>
</dbReference>
<dbReference type="HAMAP" id="MF_00346">
    <property type="entry name" value="UPF0149"/>
    <property type="match status" value="1"/>
</dbReference>
<dbReference type="InterPro" id="IPR011978">
    <property type="entry name" value="YgfB-like"/>
</dbReference>
<dbReference type="InterPro" id="IPR036255">
    <property type="entry name" value="YgfB-like_sf"/>
</dbReference>
<dbReference type="NCBIfam" id="NF003405">
    <property type="entry name" value="PRK04758.1"/>
    <property type="match status" value="1"/>
</dbReference>
<dbReference type="NCBIfam" id="TIGR02292">
    <property type="entry name" value="ygfB_yecA"/>
    <property type="match status" value="1"/>
</dbReference>
<dbReference type="PANTHER" id="PTHR37528">
    <property type="entry name" value="UPF0149 PROTEIN YGFB"/>
    <property type="match status" value="1"/>
</dbReference>
<dbReference type="PANTHER" id="PTHR37528:SF1">
    <property type="entry name" value="UPF0149 PROTEIN YGFB"/>
    <property type="match status" value="1"/>
</dbReference>
<dbReference type="Pfam" id="PF03695">
    <property type="entry name" value="UPF0149"/>
    <property type="match status" value="1"/>
</dbReference>
<dbReference type="SUPFAM" id="SSF101327">
    <property type="entry name" value="YgfB-like"/>
    <property type="match status" value="1"/>
</dbReference>
<gene>
    <name type="ordered locus">XfasM23_0847</name>
</gene>